<reference key="1">
    <citation type="journal article" date="2005" name="Nat. Biotechnol.">
        <title>Complete genome sequence of the acetic acid bacterium Gluconobacter oxydans.</title>
        <authorList>
            <person name="Prust C."/>
            <person name="Hoffmeister M."/>
            <person name="Liesegang H."/>
            <person name="Wiezer A."/>
            <person name="Fricke W.F."/>
            <person name="Ehrenreich A."/>
            <person name="Gottschalk G."/>
            <person name="Deppenmeier U."/>
        </authorList>
    </citation>
    <scope>NUCLEOTIDE SEQUENCE [LARGE SCALE GENOMIC DNA]</scope>
    <source>
        <strain>621H</strain>
    </source>
</reference>
<gene>
    <name evidence="1" type="primary">rlmN</name>
    <name type="ordered locus">GOX0254</name>
</gene>
<sequence>MTAVIHPDIRPRINSVASDDLNAAERERIRAKSALFAPPEARLADGRRDLVGLSREELAALMTEIGEKPFRAKQLWHWIYHQGATDFSAMTTIAKPMQAKLAEHFVVSRPTTATEQTSVDETRKFLFRFRDGQEAETVYIPDRREDRGAVCISSQVGCTLSCTFCHTGTQKLVRNLGPAEIVGQFMAARDSYGEWPSPSADMPRYLSTIVLMGMGEPLYNYENVAKAMRIIMDGEGIALSRRRITLSTSGVVPMMDRCGDELGINLAISLHAVTNELRDQIVPLNRKYPIEELIAACRRYPAASNSRRITFEYIMLRGVNDSEADARELVRLIRDLPAKVNLIPFNPWPGSDFQPSTRQQLTKFANIVMDAGFASPIRTPRGQDILAACGQLKTESERQRRSATPEA</sequence>
<organism>
    <name type="scientific">Gluconobacter oxydans (strain 621H)</name>
    <name type="common">Gluconobacter suboxydans</name>
    <dbReference type="NCBI Taxonomy" id="290633"/>
    <lineage>
        <taxon>Bacteria</taxon>
        <taxon>Pseudomonadati</taxon>
        <taxon>Pseudomonadota</taxon>
        <taxon>Alphaproteobacteria</taxon>
        <taxon>Acetobacterales</taxon>
        <taxon>Acetobacteraceae</taxon>
        <taxon>Gluconobacter</taxon>
    </lineage>
</organism>
<keyword id="KW-0004">4Fe-4S</keyword>
<keyword id="KW-0963">Cytoplasm</keyword>
<keyword id="KW-1015">Disulfide bond</keyword>
<keyword id="KW-0408">Iron</keyword>
<keyword id="KW-0411">Iron-sulfur</keyword>
<keyword id="KW-0479">Metal-binding</keyword>
<keyword id="KW-0489">Methyltransferase</keyword>
<keyword id="KW-1185">Reference proteome</keyword>
<keyword id="KW-0698">rRNA processing</keyword>
<keyword id="KW-0949">S-adenosyl-L-methionine</keyword>
<keyword id="KW-0808">Transferase</keyword>
<keyword id="KW-0819">tRNA processing</keyword>
<comment type="function">
    <text evidence="1">Specifically methylates position 2 of adenine 2503 in 23S rRNA and position 2 of adenine 37 in tRNAs. m2A2503 modification seems to play a crucial role in the proofreading step occurring at the peptidyl transferase center and thus would serve to optimize ribosomal fidelity.</text>
</comment>
<comment type="catalytic activity">
    <reaction evidence="1">
        <text>adenosine(2503) in 23S rRNA + 2 reduced [2Fe-2S]-[ferredoxin] + 2 S-adenosyl-L-methionine = 2-methyladenosine(2503) in 23S rRNA + 5'-deoxyadenosine + L-methionine + 2 oxidized [2Fe-2S]-[ferredoxin] + S-adenosyl-L-homocysteine</text>
        <dbReference type="Rhea" id="RHEA:42916"/>
        <dbReference type="Rhea" id="RHEA-COMP:10000"/>
        <dbReference type="Rhea" id="RHEA-COMP:10001"/>
        <dbReference type="Rhea" id="RHEA-COMP:10152"/>
        <dbReference type="Rhea" id="RHEA-COMP:10282"/>
        <dbReference type="ChEBI" id="CHEBI:17319"/>
        <dbReference type="ChEBI" id="CHEBI:33737"/>
        <dbReference type="ChEBI" id="CHEBI:33738"/>
        <dbReference type="ChEBI" id="CHEBI:57844"/>
        <dbReference type="ChEBI" id="CHEBI:57856"/>
        <dbReference type="ChEBI" id="CHEBI:59789"/>
        <dbReference type="ChEBI" id="CHEBI:74411"/>
        <dbReference type="ChEBI" id="CHEBI:74497"/>
        <dbReference type="EC" id="2.1.1.192"/>
    </reaction>
</comment>
<comment type="catalytic activity">
    <reaction evidence="1">
        <text>adenosine(37) in tRNA + 2 reduced [2Fe-2S]-[ferredoxin] + 2 S-adenosyl-L-methionine = 2-methyladenosine(37) in tRNA + 5'-deoxyadenosine + L-methionine + 2 oxidized [2Fe-2S]-[ferredoxin] + S-adenosyl-L-homocysteine</text>
        <dbReference type="Rhea" id="RHEA:43332"/>
        <dbReference type="Rhea" id="RHEA-COMP:10000"/>
        <dbReference type="Rhea" id="RHEA-COMP:10001"/>
        <dbReference type="Rhea" id="RHEA-COMP:10162"/>
        <dbReference type="Rhea" id="RHEA-COMP:10485"/>
        <dbReference type="ChEBI" id="CHEBI:17319"/>
        <dbReference type="ChEBI" id="CHEBI:33737"/>
        <dbReference type="ChEBI" id="CHEBI:33738"/>
        <dbReference type="ChEBI" id="CHEBI:57844"/>
        <dbReference type="ChEBI" id="CHEBI:57856"/>
        <dbReference type="ChEBI" id="CHEBI:59789"/>
        <dbReference type="ChEBI" id="CHEBI:74411"/>
        <dbReference type="ChEBI" id="CHEBI:74497"/>
        <dbReference type="EC" id="2.1.1.192"/>
    </reaction>
</comment>
<comment type="cofactor">
    <cofactor evidence="1">
        <name>[4Fe-4S] cluster</name>
        <dbReference type="ChEBI" id="CHEBI:49883"/>
    </cofactor>
    <text evidence="1">Binds 1 [4Fe-4S] cluster. The cluster is coordinated with 3 cysteines and an exchangeable S-adenosyl-L-methionine.</text>
</comment>
<comment type="subcellular location">
    <subcellularLocation>
        <location evidence="1">Cytoplasm</location>
    </subcellularLocation>
</comment>
<comment type="miscellaneous">
    <text evidence="1">Reaction proceeds by a ping-pong mechanism involving intermediate methylation of a conserved cysteine residue.</text>
</comment>
<comment type="similarity">
    <text evidence="1">Belongs to the radical SAM superfamily. RlmN family.</text>
</comment>
<name>RLMN_GLUOX</name>
<accession>Q5FUA9</accession>
<evidence type="ECO:0000255" key="1">
    <source>
        <dbReference type="HAMAP-Rule" id="MF_01849"/>
    </source>
</evidence>
<evidence type="ECO:0000255" key="2">
    <source>
        <dbReference type="PROSITE-ProRule" id="PRU01266"/>
    </source>
</evidence>
<dbReference type="EC" id="2.1.1.192" evidence="1"/>
<dbReference type="EMBL" id="CP000009">
    <property type="protein sequence ID" value="AAW60037.1"/>
    <property type="molecule type" value="Genomic_DNA"/>
</dbReference>
<dbReference type="RefSeq" id="WP_011251840.1">
    <property type="nucleotide sequence ID" value="NZ_LT900338.1"/>
</dbReference>
<dbReference type="SMR" id="Q5FUA9"/>
<dbReference type="STRING" id="290633.GOX0254"/>
<dbReference type="KEGG" id="gox:GOX0254"/>
<dbReference type="eggNOG" id="COG0820">
    <property type="taxonomic scope" value="Bacteria"/>
</dbReference>
<dbReference type="HOGENOM" id="CLU_029101_2_0_5"/>
<dbReference type="Proteomes" id="UP000006375">
    <property type="component" value="Chromosome"/>
</dbReference>
<dbReference type="GO" id="GO:0005737">
    <property type="term" value="C:cytoplasm"/>
    <property type="evidence" value="ECO:0007669"/>
    <property type="project" value="UniProtKB-SubCell"/>
</dbReference>
<dbReference type="GO" id="GO:0051539">
    <property type="term" value="F:4 iron, 4 sulfur cluster binding"/>
    <property type="evidence" value="ECO:0007669"/>
    <property type="project" value="UniProtKB-UniRule"/>
</dbReference>
<dbReference type="GO" id="GO:0046872">
    <property type="term" value="F:metal ion binding"/>
    <property type="evidence" value="ECO:0007669"/>
    <property type="project" value="UniProtKB-KW"/>
</dbReference>
<dbReference type="GO" id="GO:0070040">
    <property type="term" value="F:rRNA (adenine(2503)-C2-)-methyltransferase activity"/>
    <property type="evidence" value="ECO:0007669"/>
    <property type="project" value="UniProtKB-UniRule"/>
</dbReference>
<dbReference type="GO" id="GO:0019843">
    <property type="term" value="F:rRNA binding"/>
    <property type="evidence" value="ECO:0007669"/>
    <property type="project" value="UniProtKB-UniRule"/>
</dbReference>
<dbReference type="GO" id="GO:0002935">
    <property type="term" value="F:tRNA (adenine(37)-C2)-methyltransferase activity"/>
    <property type="evidence" value="ECO:0007669"/>
    <property type="project" value="UniProtKB-UniRule"/>
</dbReference>
<dbReference type="GO" id="GO:0000049">
    <property type="term" value="F:tRNA binding"/>
    <property type="evidence" value="ECO:0007669"/>
    <property type="project" value="UniProtKB-UniRule"/>
</dbReference>
<dbReference type="GO" id="GO:0070475">
    <property type="term" value="P:rRNA base methylation"/>
    <property type="evidence" value="ECO:0007669"/>
    <property type="project" value="UniProtKB-UniRule"/>
</dbReference>
<dbReference type="GO" id="GO:0030488">
    <property type="term" value="P:tRNA methylation"/>
    <property type="evidence" value="ECO:0007669"/>
    <property type="project" value="UniProtKB-UniRule"/>
</dbReference>
<dbReference type="CDD" id="cd01335">
    <property type="entry name" value="Radical_SAM"/>
    <property type="match status" value="1"/>
</dbReference>
<dbReference type="FunFam" id="3.20.20.70:FF:000014">
    <property type="entry name" value="Probable dual-specificity RNA methyltransferase RlmN"/>
    <property type="match status" value="1"/>
</dbReference>
<dbReference type="Gene3D" id="1.10.150.530">
    <property type="match status" value="1"/>
</dbReference>
<dbReference type="Gene3D" id="3.20.20.70">
    <property type="entry name" value="Aldolase class I"/>
    <property type="match status" value="1"/>
</dbReference>
<dbReference type="HAMAP" id="MF_01849">
    <property type="entry name" value="RNA_methyltr_RlmN"/>
    <property type="match status" value="1"/>
</dbReference>
<dbReference type="InterPro" id="IPR013785">
    <property type="entry name" value="Aldolase_TIM"/>
</dbReference>
<dbReference type="InterPro" id="IPR040072">
    <property type="entry name" value="Methyltransferase_A"/>
</dbReference>
<dbReference type="InterPro" id="IPR048641">
    <property type="entry name" value="RlmN_N"/>
</dbReference>
<dbReference type="InterPro" id="IPR027492">
    <property type="entry name" value="RNA_MTrfase_RlmN"/>
</dbReference>
<dbReference type="InterPro" id="IPR004383">
    <property type="entry name" value="rRNA_lsu_MTrfase_RlmN/Cfr"/>
</dbReference>
<dbReference type="InterPro" id="IPR007197">
    <property type="entry name" value="rSAM"/>
</dbReference>
<dbReference type="NCBIfam" id="TIGR00048">
    <property type="entry name" value="rRNA_mod_RlmN"/>
    <property type="match status" value="1"/>
</dbReference>
<dbReference type="PANTHER" id="PTHR30544">
    <property type="entry name" value="23S RRNA METHYLTRANSFERASE"/>
    <property type="match status" value="1"/>
</dbReference>
<dbReference type="PANTHER" id="PTHR30544:SF5">
    <property type="entry name" value="RADICAL SAM CORE DOMAIN-CONTAINING PROTEIN"/>
    <property type="match status" value="1"/>
</dbReference>
<dbReference type="Pfam" id="PF04055">
    <property type="entry name" value="Radical_SAM"/>
    <property type="match status" value="1"/>
</dbReference>
<dbReference type="Pfam" id="PF21016">
    <property type="entry name" value="RlmN_N"/>
    <property type="match status" value="1"/>
</dbReference>
<dbReference type="PIRSF" id="PIRSF006004">
    <property type="entry name" value="CHP00048"/>
    <property type="match status" value="1"/>
</dbReference>
<dbReference type="SFLD" id="SFLDF00275">
    <property type="entry name" value="adenosine_C2_methyltransferase"/>
    <property type="match status" value="1"/>
</dbReference>
<dbReference type="SFLD" id="SFLDG01062">
    <property type="entry name" value="methyltransferase_(Class_A)"/>
    <property type="match status" value="1"/>
</dbReference>
<dbReference type="SUPFAM" id="SSF102114">
    <property type="entry name" value="Radical SAM enzymes"/>
    <property type="match status" value="1"/>
</dbReference>
<dbReference type="PROSITE" id="PS51918">
    <property type="entry name" value="RADICAL_SAM"/>
    <property type="match status" value="1"/>
</dbReference>
<feature type="chain" id="PRO_0000350198" description="Dual-specificity RNA methyltransferase RlmN">
    <location>
        <begin position="1"/>
        <end position="407"/>
    </location>
</feature>
<feature type="domain" description="Radical SAM core" evidence="2">
    <location>
        <begin position="144"/>
        <end position="378"/>
    </location>
</feature>
<feature type="active site" description="Proton acceptor" evidence="1">
    <location>
        <position position="136"/>
    </location>
</feature>
<feature type="active site" description="S-methylcysteine intermediate" evidence="1">
    <location>
        <position position="389"/>
    </location>
</feature>
<feature type="binding site" evidence="1">
    <location>
        <position position="158"/>
    </location>
    <ligand>
        <name>[4Fe-4S] cluster</name>
        <dbReference type="ChEBI" id="CHEBI:49883"/>
        <note>4Fe-4S-S-AdoMet</note>
    </ligand>
</feature>
<feature type="binding site" evidence="1">
    <location>
        <position position="162"/>
    </location>
    <ligand>
        <name>[4Fe-4S] cluster</name>
        <dbReference type="ChEBI" id="CHEBI:49883"/>
        <note>4Fe-4S-S-AdoMet</note>
    </ligand>
</feature>
<feature type="binding site" evidence="1">
    <location>
        <position position="165"/>
    </location>
    <ligand>
        <name>[4Fe-4S] cluster</name>
        <dbReference type="ChEBI" id="CHEBI:49883"/>
        <note>4Fe-4S-S-AdoMet</note>
    </ligand>
</feature>
<feature type="binding site" evidence="1">
    <location>
        <begin position="215"/>
        <end position="216"/>
    </location>
    <ligand>
        <name>S-adenosyl-L-methionine</name>
        <dbReference type="ChEBI" id="CHEBI:59789"/>
    </ligand>
</feature>
<feature type="binding site" evidence="1">
    <location>
        <position position="247"/>
    </location>
    <ligand>
        <name>S-adenosyl-L-methionine</name>
        <dbReference type="ChEBI" id="CHEBI:59789"/>
    </ligand>
</feature>
<feature type="binding site" evidence="1">
    <location>
        <begin position="269"/>
        <end position="271"/>
    </location>
    <ligand>
        <name>S-adenosyl-L-methionine</name>
        <dbReference type="ChEBI" id="CHEBI:59789"/>
    </ligand>
</feature>
<feature type="binding site" evidence="1">
    <location>
        <position position="346"/>
    </location>
    <ligand>
        <name>S-adenosyl-L-methionine</name>
        <dbReference type="ChEBI" id="CHEBI:59789"/>
    </ligand>
</feature>
<feature type="disulfide bond" description="(transient)" evidence="1">
    <location>
        <begin position="151"/>
        <end position="389"/>
    </location>
</feature>
<protein>
    <recommendedName>
        <fullName evidence="1">Dual-specificity RNA methyltransferase RlmN</fullName>
        <ecNumber evidence="1">2.1.1.192</ecNumber>
    </recommendedName>
    <alternativeName>
        <fullName evidence="1">23S rRNA (adenine(2503)-C(2))-methyltransferase</fullName>
    </alternativeName>
    <alternativeName>
        <fullName evidence="1">23S rRNA m2A2503 methyltransferase</fullName>
    </alternativeName>
    <alternativeName>
        <fullName evidence="1">Ribosomal RNA large subunit methyltransferase N</fullName>
    </alternativeName>
    <alternativeName>
        <fullName evidence="1">tRNA (adenine(37)-C(2))-methyltransferase</fullName>
    </alternativeName>
    <alternativeName>
        <fullName evidence="1">tRNA m2A37 methyltransferase</fullName>
    </alternativeName>
</protein>
<proteinExistence type="inferred from homology"/>